<gene>
    <name evidence="1" type="primary">rimM</name>
    <name type="ordered locus">Pmen_3400</name>
</gene>
<feature type="chain" id="PRO_1000001218" description="Ribosome maturation factor RimM">
    <location>
        <begin position="1"/>
        <end position="178"/>
    </location>
</feature>
<feature type="domain" description="PRC barrel" evidence="1">
    <location>
        <begin position="101"/>
        <end position="178"/>
    </location>
</feature>
<proteinExistence type="inferred from homology"/>
<comment type="function">
    <text evidence="1">An accessory protein needed during the final step in the assembly of 30S ribosomal subunit, possibly for assembly of the head region. Essential for efficient processing of 16S rRNA. May be needed both before and after RbfA during the maturation of 16S rRNA. It has affinity for free ribosomal 30S subunits but not for 70S ribosomes.</text>
</comment>
<comment type="subunit">
    <text evidence="1">Binds ribosomal protein uS19.</text>
</comment>
<comment type="subcellular location">
    <subcellularLocation>
        <location evidence="1">Cytoplasm</location>
    </subcellularLocation>
</comment>
<comment type="domain">
    <text evidence="1">The PRC barrel domain binds ribosomal protein uS19.</text>
</comment>
<comment type="similarity">
    <text evidence="1">Belongs to the RimM family.</text>
</comment>
<accession>A4XXT6</accession>
<organism>
    <name type="scientific">Ectopseudomonas mendocina (strain ymp)</name>
    <name type="common">Pseudomonas mendocina</name>
    <dbReference type="NCBI Taxonomy" id="399739"/>
    <lineage>
        <taxon>Bacteria</taxon>
        <taxon>Pseudomonadati</taxon>
        <taxon>Pseudomonadota</taxon>
        <taxon>Gammaproteobacteria</taxon>
        <taxon>Pseudomonadales</taxon>
        <taxon>Pseudomonadaceae</taxon>
        <taxon>Ectopseudomonas</taxon>
    </lineage>
</organism>
<protein>
    <recommendedName>
        <fullName evidence="1">Ribosome maturation factor RimM</fullName>
    </recommendedName>
</protein>
<name>RIMM_ECTM1</name>
<evidence type="ECO:0000255" key="1">
    <source>
        <dbReference type="HAMAP-Rule" id="MF_00014"/>
    </source>
</evidence>
<keyword id="KW-0143">Chaperone</keyword>
<keyword id="KW-0963">Cytoplasm</keyword>
<keyword id="KW-0690">Ribosome biogenesis</keyword>
<keyword id="KW-0698">rRNA processing</keyword>
<reference key="1">
    <citation type="submission" date="2007-04" db="EMBL/GenBank/DDBJ databases">
        <title>Complete sequence of Pseudomonas mendocina ymp.</title>
        <authorList>
            <consortium name="US DOE Joint Genome Institute"/>
            <person name="Copeland A."/>
            <person name="Lucas S."/>
            <person name="Lapidus A."/>
            <person name="Barry K."/>
            <person name="Glavina del Rio T."/>
            <person name="Dalin E."/>
            <person name="Tice H."/>
            <person name="Pitluck S."/>
            <person name="Kiss H."/>
            <person name="Brettin T."/>
            <person name="Detter J.C."/>
            <person name="Bruce D."/>
            <person name="Han C."/>
            <person name="Schmutz J."/>
            <person name="Larimer F."/>
            <person name="Land M."/>
            <person name="Hauser L."/>
            <person name="Kyrpides N."/>
            <person name="Mikhailova N."/>
            <person name="Hersman L."/>
            <person name="Dubois J."/>
            <person name="Maurice P."/>
            <person name="Richardson P."/>
        </authorList>
    </citation>
    <scope>NUCLEOTIDE SEQUENCE [LARGE SCALE GENOMIC DNA]</scope>
    <source>
        <strain>ymp</strain>
    </source>
</reference>
<dbReference type="EMBL" id="CP000680">
    <property type="protein sequence ID" value="ABP86152.1"/>
    <property type="molecule type" value="Genomic_DNA"/>
</dbReference>
<dbReference type="SMR" id="A4XXT6"/>
<dbReference type="STRING" id="399739.Pmen_3400"/>
<dbReference type="KEGG" id="pmy:Pmen_3400"/>
<dbReference type="PATRIC" id="fig|399739.8.peg.3450"/>
<dbReference type="eggNOG" id="COG0806">
    <property type="taxonomic scope" value="Bacteria"/>
</dbReference>
<dbReference type="HOGENOM" id="CLU_077636_1_0_6"/>
<dbReference type="OrthoDB" id="9783509at2"/>
<dbReference type="GO" id="GO:0005737">
    <property type="term" value="C:cytoplasm"/>
    <property type="evidence" value="ECO:0007669"/>
    <property type="project" value="UniProtKB-SubCell"/>
</dbReference>
<dbReference type="GO" id="GO:0005840">
    <property type="term" value="C:ribosome"/>
    <property type="evidence" value="ECO:0007669"/>
    <property type="project" value="InterPro"/>
</dbReference>
<dbReference type="GO" id="GO:0043022">
    <property type="term" value="F:ribosome binding"/>
    <property type="evidence" value="ECO:0007669"/>
    <property type="project" value="InterPro"/>
</dbReference>
<dbReference type="GO" id="GO:0042274">
    <property type="term" value="P:ribosomal small subunit biogenesis"/>
    <property type="evidence" value="ECO:0007669"/>
    <property type="project" value="UniProtKB-UniRule"/>
</dbReference>
<dbReference type="GO" id="GO:0006364">
    <property type="term" value="P:rRNA processing"/>
    <property type="evidence" value="ECO:0007669"/>
    <property type="project" value="UniProtKB-UniRule"/>
</dbReference>
<dbReference type="Gene3D" id="2.30.30.240">
    <property type="entry name" value="PRC-barrel domain"/>
    <property type="match status" value="1"/>
</dbReference>
<dbReference type="Gene3D" id="2.40.30.60">
    <property type="entry name" value="RimM"/>
    <property type="match status" value="1"/>
</dbReference>
<dbReference type="HAMAP" id="MF_00014">
    <property type="entry name" value="Ribosome_mat_RimM"/>
    <property type="match status" value="1"/>
</dbReference>
<dbReference type="InterPro" id="IPR011033">
    <property type="entry name" value="PRC_barrel-like_sf"/>
</dbReference>
<dbReference type="InterPro" id="IPR056792">
    <property type="entry name" value="PRC_RimM"/>
</dbReference>
<dbReference type="InterPro" id="IPR011961">
    <property type="entry name" value="RimM"/>
</dbReference>
<dbReference type="InterPro" id="IPR002676">
    <property type="entry name" value="RimM_N"/>
</dbReference>
<dbReference type="InterPro" id="IPR036976">
    <property type="entry name" value="RimM_N_sf"/>
</dbReference>
<dbReference type="InterPro" id="IPR009000">
    <property type="entry name" value="Transl_B-barrel_sf"/>
</dbReference>
<dbReference type="NCBIfam" id="TIGR02273">
    <property type="entry name" value="16S_RimM"/>
    <property type="match status" value="1"/>
</dbReference>
<dbReference type="PANTHER" id="PTHR33692">
    <property type="entry name" value="RIBOSOME MATURATION FACTOR RIMM"/>
    <property type="match status" value="1"/>
</dbReference>
<dbReference type="PANTHER" id="PTHR33692:SF1">
    <property type="entry name" value="RIBOSOME MATURATION FACTOR RIMM"/>
    <property type="match status" value="1"/>
</dbReference>
<dbReference type="Pfam" id="PF24986">
    <property type="entry name" value="PRC_RimM"/>
    <property type="match status" value="1"/>
</dbReference>
<dbReference type="Pfam" id="PF01782">
    <property type="entry name" value="RimM"/>
    <property type="match status" value="1"/>
</dbReference>
<dbReference type="SUPFAM" id="SSF50346">
    <property type="entry name" value="PRC-barrel domain"/>
    <property type="match status" value="1"/>
</dbReference>
<dbReference type="SUPFAM" id="SSF50447">
    <property type="entry name" value="Translation proteins"/>
    <property type="match status" value="1"/>
</dbReference>
<sequence>MSTTPAVAEDLIVLGKIVSVHGVRGEVKVYSFTDPIDNVLDYRHWTLRRDGEVKKVELASGRLQGKVLVAKLKGLDDREIARTYAGFEICVPRSELPDLEEGEFYWYQLQGLKVIDQAGQLLGVVDHLFETGANDVMVVKACAGSLDDRERLLPYTDQCVLSIDLAAGEMRVDWDADF</sequence>